<gene>
    <name type="primary">kics2</name>
    <name type="ORF">si:ch211-125a15.1</name>
    <name type="ORF">zgc:136251</name>
</gene>
<organism>
    <name type="scientific">Danio rerio</name>
    <name type="common">Zebrafish</name>
    <name type="synonym">Brachydanio rerio</name>
    <dbReference type="NCBI Taxonomy" id="7955"/>
    <lineage>
        <taxon>Eukaryota</taxon>
        <taxon>Metazoa</taxon>
        <taxon>Chordata</taxon>
        <taxon>Craniata</taxon>
        <taxon>Vertebrata</taxon>
        <taxon>Euteleostomi</taxon>
        <taxon>Actinopterygii</taxon>
        <taxon>Neopterygii</taxon>
        <taxon>Teleostei</taxon>
        <taxon>Ostariophysi</taxon>
        <taxon>Cypriniformes</taxon>
        <taxon>Danionidae</taxon>
        <taxon>Danioninae</taxon>
        <taxon>Danio</taxon>
    </lineage>
</organism>
<feature type="chain" id="PRO_0000321904" description="KICSTOR subunit 2">
    <location>
        <begin position="1"/>
        <end position="449"/>
    </location>
</feature>
<feature type="splice variant" id="VSP_034841" description="In isoform 2." evidence="3">
    <location>
        <begin position="153"/>
        <end position="187"/>
    </location>
</feature>
<feature type="sequence conflict" description="In Ref. 1; CAK04780." evidence="4" ref="1">
    <original>P</original>
    <variation>S</variation>
    <location>
        <position position="14"/>
    </location>
</feature>
<feature type="sequence conflict" description="In Ref. 2; AAI16473." evidence="4" ref="2">
    <original>K</original>
    <variation>E</variation>
    <location>
        <position position="438"/>
    </location>
</feature>
<name>KICS2_DANRE</name>
<reference key="1">
    <citation type="journal article" date="2013" name="Nature">
        <title>The zebrafish reference genome sequence and its relationship to the human genome.</title>
        <authorList>
            <person name="Howe K."/>
            <person name="Clark M.D."/>
            <person name="Torroja C.F."/>
            <person name="Torrance J."/>
            <person name="Berthelot C."/>
            <person name="Muffato M."/>
            <person name="Collins J.E."/>
            <person name="Humphray S."/>
            <person name="McLaren K."/>
            <person name="Matthews L."/>
            <person name="McLaren S."/>
            <person name="Sealy I."/>
            <person name="Caccamo M."/>
            <person name="Churcher C."/>
            <person name="Scott C."/>
            <person name="Barrett J.C."/>
            <person name="Koch R."/>
            <person name="Rauch G.J."/>
            <person name="White S."/>
            <person name="Chow W."/>
            <person name="Kilian B."/>
            <person name="Quintais L.T."/>
            <person name="Guerra-Assuncao J.A."/>
            <person name="Zhou Y."/>
            <person name="Gu Y."/>
            <person name="Yen J."/>
            <person name="Vogel J.H."/>
            <person name="Eyre T."/>
            <person name="Redmond S."/>
            <person name="Banerjee R."/>
            <person name="Chi J."/>
            <person name="Fu B."/>
            <person name="Langley E."/>
            <person name="Maguire S.F."/>
            <person name="Laird G.K."/>
            <person name="Lloyd D."/>
            <person name="Kenyon E."/>
            <person name="Donaldson S."/>
            <person name="Sehra H."/>
            <person name="Almeida-King J."/>
            <person name="Loveland J."/>
            <person name="Trevanion S."/>
            <person name="Jones M."/>
            <person name="Quail M."/>
            <person name="Willey D."/>
            <person name="Hunt A."/>
            <person name="Burton J."/>
            <person name="Sims S."/>
            <person name="McLay K."/>
            <person name="Plumb B."/>
            <person name="Davis J."/>
            <person name="Clee C."/>
            <person name="Oliver K."/>
            <person name="Clark R."/>
            <person name="Riddle C."/>
            <person name="Elliot D."/>
            <person name="Threadgold G."/>
            <person name="Harden G."/>
            <person name="Ware D."/>
            <person name="Begum S."/>
            <person name="Mortimore B."/>
            <person name="Kerry G."/>
            <person name="Heath P."/>
            <person name="Phillimore B."/>
            <person name="Tracey A."/>
            <person name="Corby N."/>
            <person name="Dunn M."/>
            <person name="Johnson C."/>
            <person name="Wood J."/>
            <person name="Clark S."/>
            <person name="Pelan S."/>
            <person name="Griffiths G."/>
            <person name="Smith M."/>
            <person name="Glithero R."/>
            <person name="Howden P."/>
            <person name="Barker N."/>
            <person name="Lloyd C."/>
            <person name="Stevens C."/>
            <person name="Harley J."/>
            <person name="Holt K."/>
            <person name="Panagiotidis G."/>
            <person name="Lovell J."/>
            <person name="Beasley H."/>
            <person name="Henderson C."/>
            <person name="Gordon D."/>
            <person name="Auger K."/>
            <person name="Wright D."/>
            <person name="Collins J."/>
            <person name="Raisen C."/>
            <person name="Dyer L."/>
            <person name="Leung K."/>
            <person name="Robertson L."/>
            <person name="Ambridge K."/>
            <person name="Leongamornlert D."/>
            <person name="McGuire S."/>
            <person name="Gilderthorp R."/>
            <person name="Griffiths C."/>
            <person name="Manthravadi D."/>
            <person name="Nichol S."/>
            <person name="Barker G."/>
            <person name="Whitehead S."/>
            <person name="Kay M."/>
            <person name="Brown J."/>
            <person name="Murnane C."/>
            <person name="Gray E."/>
            <person name="Humphries M."/>
            <person name="Sycamore N."/>
            <person name="Barker D."/>
            <person name="Saunders D."/>
            <person name="Wallis J."/>
            <person name="Babbage A."/>
            <person name="Hammond S."/>
            <person name="Mashreghi-Mohammadi M."/>
            <person name="Barr L."/>
            <person name="Martin S."/>
            <person name="Wray P."/>
            <person name="Ellington A."/>
            <person name="Matthews N."/>
            <person name="Ellwood M."/>
            <person name="Woodmansey R."/>
            <person name="Clark G."/>
            <person name="Cooper J."/>
            <person name="Tromans A."/>
            <person name="Grafham D."/>
            <person name="Skuce C."/>
            <person name="Pandian R."/>
            <person name="Andrews R."/>
            <person name="Harrison E."/>
            <person name="Kimberley A."/>
            <person name="Garnett J."/>
            <person name="Fosker N."/>
            <person name="Hall R."/>
            <person name="Garner P."/>
            <person name="Kelly D."/>
            <person name="Bird C."/>
            <person name="Palmer S."/>
            <person name="Gehring I."/>
            <person name="Berger A."/>
            <person name="Dooley C.M."/>
            <person name="Ersan-Urun Z."/>
            <person name="Eser C."/>
            <person name="Geiger H."/>
            <person name="Geisler M."/>
            <person name="Karotki L."/>
            <person name="Kirn A."/>
            <person name="Konantz J."/>
            <person name="Konantz M."/>
            <person name="Oberlander M."/>
            <person name="Rudolph-Geiger S."/>
            <person name="Teucke M."/>
            <person name="Lanz C."/>
            <person name="Raddatz G."/>
            <person name="Osoegawa K."/>
            <person name="Zhu B."/>
            <person name="Rapp A."/>
            <person name="Widaa S."/>
            <person name="Langford C."/>
            <person name="Yang F."/>
            <person name="Schuster S.C."/>
            <person name="Carter N.P."/>
            <person name="Harrow J."/>
            <person name="Ning Z."/>
            <person name="Herrero J."/>
            <person name="Searle S.M."/>
            <person name="Enright A."/>
            <person name="Geisler R."/>
            <person name="Plasterk R.H."/>
            <person name="Lee C."/>
            <person name="Westerfield M."/>
            <person name="de Jong P.J."/>
            <person name="Zon L.I."/>
            <person name="Postlethwait J.H."/>
            <person name="Nusslein-Volhard C."/>
            <person name="Hubbard T.J."/>
            <person name="Roest Crollius H."/>
            <person name="Rogers J."/>
            <person name="Stemple D.L."/>
        </authorList>
    </citation>
    <scope>NUCLEOTIDE SEQUENCE [LARGE SCALE GENOMIC DNA]</scope>
    <source>
        <strain>Tuebingen</strain>
    </source>
</reference>
<reference key="2">
    <citation type="submission" date="2007-06" db="EMBL/GenBank/DDBJ databases">
        <authorList>
            <consortium name="NIH - Zebrafish Gene Collection (ZGC) project"/>
        </authorList>
    </citation>
    <scope>NUCLEOTIDE SEQUENCE [LARGE SCALE MRNA] (ISOFORM 2)</scope>
    <source>
        <strain>SJD</strain>
    </source>
</reference>
<reference key="3">
    <citation type="journal article" date="2025" name="Am. J. Hum. Genet.">
        <title>Bi-allelic KICS2 mutations impair KICSTOR complex-mediated mTORC1 regulation, causing intellectual disability and epilepsy.</title>
        <authorList>
            <person name="Buchert R."/>
            <person name="Burkhalter M.D."/>
            <person name="Huridou C."/>
            <person name="Sofan L."/>
            <person name="Roser T."/>
            <person name="Cremer K."/>
            <person name="Alvi J.R."/>
            <person name="Efthymiou S."/>
            <person name="Froukh T."/>
            <person name="Gulieva S."/>
            <person name="Guliyeva U."/>
            <person name="Hamdallah M."/>
            <person name="Holder-Espinasse M."/>
            <person name="Kaiyrzhanov R."/>
            <person name="Klingler D."/>
            <person name="Koko M."/>
            <person name="Matthies L."/>
            <person name="Park J."/>
            <person name="Sturm M."/>
            <person name="Velic A."/>
            <person name="Spranger S."/>
            <person name="Sultan T."/>
            <person name="Engels H."/>
            <person name="Lerche H."/>
            <person name="Houlden H."/>
            <person name="Pagnamenta A.T."/>
            <person name="Borggraefe I."/>
            <person name="Weber Y."/>
            <person name="Bonnen P.E."/>
            <person name="Maroofian R."/>
            <person name="Riess O."/>
            <person name="Weber J.J."/>
            <person name="Philipp M."/>
            <person name="Haack T.B."/>
        </authorList>
    </citation>
    <scope>DISRUPTION PHENOTYPE</scope>
</reference>
<dbReference type="EMBL" id="BX255922">
    <property type="protein sequence ID" value="CAI11582.2"/>
    <property type="molecule type" value="Genomic_DNA"/>
</dbReference>
<dbReference type="EMBL" id="CR790375">
    <property type="protein sequence ID" value="CAK04780.1"/>
    <property type="molecule type" value="Genomic_DNA"/>
</dbReference>
<dbReference type="EMBL" id="BC116472">
    <property type="protein sequence ID" value="AAI16473.1"/>
    <property type="status" value="ALT_FRAME"/>
    <property type="molecule type" value="mRNA"/>
</dbReference>
<dbReference type="RefSeq" id="NP_001025261.3">
    <molecule id="Q1L8F9-1"/>
    <property type="nucleotide sequence ID" value="NM_001030090.3"/>
</dbReference>
<dbReference type="SMR" id="Q1L8F9"/>
<dbReference type="FunCoup" id="Q1L8F9">
    <property type="interactions" value="179"/>
</dbReference>
<dbReference type="STRING" id="7955.ENSDARP00000117810"/>
<dbReference type="PaxDb" id="7955-ENSDARP00000117810"/>
<dbReference type="Ensembl" id="ENSDART00000148155">
    <molecule id="Q1L8F9-1"/>
    <property type="protein sequence ID" value="ENSDARP00000117810"/>
    <property type="gene ID" value="ENSDARG00000045790"/>
</dbReference>
<dbReference type="GeneID" id="555715"/>
<dbReference type="KEGG" id="dre:555715"/>
<dbReference type="AGR" id="ZFIN:ZDB-GENE-041210-104"/>
<dbReference type="CTD" id="144577"/>
<dbReference type="ZFIN" id="ZDB-GENE-041210-104">
    <property type="gene designation" value="kics2"/>
</dbReference>
<dbReference type="eggNOG" id="ENOG502QTBE">
    <property type="taxonomic scope" value="Eukaryota"/>
</dbReference>
<dbReference type="HOGENOM" id="CLU_050627_0_0_1"/>
<dbReference type="InParanoid" id="Q1L8F9"/>
<dbReference type="OMA" id="PQKFINA"/>
<dbReference type="OrthoDB" id="18134at2759"/>
<dbReference type="PhylomeDB" id="Q1L8F9"/>
<dbReference type="TreeFam" id="TF329125"/>
<dbReference type="PRO" id="PR:Q1L8F9"/>
<dbReference type="Proteomes" id="UP000000437">
    <property type="component" value="Chromosome 4"/>
</dbReference>
<dbReference type="Bgee" id="ENSDARG00000045790">
    <property type="expression patterns" value="Expressed in mature ovarian follicle and 21 other cell types or tissues"/>
</dbReference>
<dbReference type="ExpressionAtlas" id="Q1L8F9">
    <property type="expression patterns" value="baseline"/>
</dbReference>
<dbReference type="GO" id="GO:0140007">
    <property type="term" value="C:KICSTOR complex"/>
    <property type="evidence" value="ECO:0000250"/>
    <property type="project" value="UniProtKB"/>
</dbReference>
<dbReference type="GO" id="GO:0005765">
    <property type="term" value="C:lysosomal membrane"/>
    <property type="evidence" value="ECO:0007669"/>
    <property type="project" value="UniProtKB-SubCell"/>
</dbReference>
<dbReference type="GO" id="GO:0034198">
    <property type="term" value="P:cellular response to amino acid starvation"/>
    <property type="evidence" value="ECO:0000250"/>
    <property type="project" value="UniProtKB"/>
</dbReference>
<dbReference type="GO" id="GO:0042149">
    <property type="term" value="P:cellular response to glucose starvation"/>
    <property type="evidence" value="ECO:0000250"/>
    <property type="project" value="UniProtKB"/>
</dbReference>
<dbReference type="GO" id="GO:1904262">
    <property type="term" value="P:negative regulation of TORC1 signaling"/>
    <property type="evidence" value="ECO:0000250"/>
    <property type="project" value="UniProtKB"/>
</dbReference>
<dbReference type="GO" id="GO:0061462">
    <property type="term" value="P:protein localization to lysosome"/>
    <property type="evidence" value="ECO:0000250"/>
    <property type="project" value="UniProtKB"/>
</dbReference>
<dbReference type="FunFam" id="1.10.3450.30:FF:000001">
    <property type="entry name" value="KICSTOR complex protein C12orf66 homolog"/>
    <property type="match status" value="1"/>
</dbReference>
<dbReference type="Gene3D" id="1.10.3450.30">
    <property type="match status" value="1"/>
</dbReference>
<dbReference type="InterPro" id="IPR038060">
    <property type="entry name" value="C12orf66-like_central_sf"/>
</dbReference>
<dbReference type="InterPro" id="IPR018544">
    <property type="entry name" value="KICS_2"/>
</dbReference>
<dbReference type="PANTHER" id="PTHR31581">
    <property type="entry name" value="KICSTOR COMPLEX PROTEIN C12ORF66"/>
    <property type="match status" value="1"/>
</dbReference>
<dbReference type="PANTHER" id="PTHR31581:SF1">
    <property type="entry name" value="KICSTOR SUBUNIT 2"/>
    <property type="match status" value="1"/>
</dbReference>
<dbReference type="Pfam" id="PF09404">
    <property type="entry name" value="C12orf66_like"/>
    <property type="match status" value="1"/>
</dbReference>
<dbReference type="SUPFAM" id="SSF160651">
    <property type="entry name" value="FLJ32549 C-terminal domain-like"/>
    <property type="match status" value="1"/>
</dbReference>
<dbReference type="SUPFAM" id="SSF158548">
    <property type="entry name" value="FLJ32549 domain-like"/>
    <property type="match status" value="1"/>
</dbReference>
<evidence type="ECO:0000250" key="1">
    <source>
        <dbReference type="UniProtKB" id="Q96MD2"/>
    </source>
</evidence>
<evidence type="ECO:0000269" key="2">
    <source>
    </source>
</evidence>
<evidence type="ECO:0000303" key="3">
    <source ref="2"/>
</evidence>
<evidence type="ECO:0000305" key="4"/>
<protein>
    <recommendedName>
        <fullName evidence="4">KICSTOR subunit 2</fullName>
    </recommendedName>
</protein>
<accession>Q1L8F9</accession>
<accession>Q1JQ61</accession>
<accession>Q5RIG9</accession>
<sequence length="449" mass="51167">MCDPQRDEELRPVPKERAVLESFFTQLGMFWFDRAKDYVEKEKDASKSAGAIWGSLLAALAHLAAAEKAYHNMTFLGQKLGGQSFFSRKDSIRTIYTSLHNELKKVVSMGRHAPGGSTPNLEELLPHLSEQLCHFTQARMEIADFYEKMHTLGSQKTVNSEELVGALDSILQKYSSRFHHPILSRLESSFQVEVDVLTQLLRCQAQISEWHFLPSLLNLHGAHSKLQAWGQVFERQRETRKHLFGGQSQKAVQPPHLFLWLQRLQATLLAKFSFYFHEALSRQTSQSEMKTLTARTSLDYFGKISGFIRKYDASNVSLVFDNRGSESFQGHGYHHPQSYREAPKGVDQFPAVVSLPGGERPVTHWPNVIMIMSDRSTELNTLDKVVHFYDDKVQSTYFLARPEPHFTIVVIFDGRKSERDSYIVAFLQELIGSLRNSKPFTSLKPGSKG</sequence>
<proteinExistence type="evidence at transcript level"/>
<comment type="function">
    <text evidence="1">As part of the KICSTOR complex may function in the amino acid-sensing branch of the TORC1 signaling pathway.</text>
</comment>
<comment type="subunit">
    <text evidence="1">May be part of the KICSTOR complex.</text>
</comment>
<comment type="subcellular location">
    <subcellularLocation>
        <location evidence="1">Lysosome membrane</location>
    </subcellularLocation>
</comment>
<comment type="alternative products">
    <event type="alternative splicing"/>
    <isoform>
        <id>Q1L8F9-1</id>
        <name>1</name>
        <sequence type="displayed"/>
    </isoform>
    <isoform>
        <id>Q1L8F9-2</id>
        <name>2</name>
        <sequence type="described" ref="VSP_034841"/>
    </isoform>
</comment>
<comment type="disruption phenotype">
    <text evidence="2">Morphant embryos show edema, otolith defects, impaired left-right patterning, and reduced ciliary length.</text>
</comment>
<comment type="similarity">
    <text evidence="4">Belongs to the KICS2 family.</text>
</comment>
<comment type="sequence caution" evidence="4">
    <conflict type="frameshift">
        <sequence resource="EMBL-CDS" id="AAI16473"/>
    </conflict>
</comment>
<keyword id="KW-0025">Alternative splicing</keyword>
<keyword id="KW-0458">Lysosome</keyword>
<keyword id="KW-0472">Membrane</keyword>
<keyword id="KW-1185">Reference proteome</keyword>